<organismHost>
    <name type="scientific">Equus caballus</name>
    <name type="common">Horse</name>
    <dbReference type="NCBI Taxonomy" id="9796"/>
</organismHost>
<organism>
    <name type="scientific">Equine herpesvirus 4 (strain 1942)</name>
    <name type="common">EHV-4</name>
    <name type="synonym">Equine rhinopneumonitis virus</name>
    <dbReference type="NCBI Taxonomy" id="10333"/>
    <lineage>
        <taxon>Viruses</taxon>
        <taxon>Duplodnaviria</taxon>
        <taxon>Heunggongvirae</taxon>
        <taxon>Peploviricota</taxon>
        <taxon>Herviviricetes</taxon>
        <taxon>Herpesvirales</taxon>
        <taxon>Orthoherpesviridae</taxon>
        <taxon>Alphaherpesvirinae</taxon>
        <taxon>Varicellovirus</taxon>
        <taxon>Varicellovirus equidalpha4</taxon>
        <taxon>Equid alphaherpesvirus 4</taxon>
    </lineage>
</organism>
<accession>P18345</accession>
<evidence type="ECO:0000250" key="1"/>
<evidence type="ECO:0000255" key="2"/>
<evidence type="ECO:0000256" key="3">
    <source>
        <dbReference type="SAM" id="MobiDB-lite"/>
    </source>
</evidence>
<evidence type="ECO:0000305" key="4"/>
<sequence>GSTWPSRCHSTLLGDRPHFIQPAPNRVDLLFKDIPESATGLYVFVLLYNGHPEAWTYTLLSTANHFMNVLTDRTRPRLGEHFYTDHGHQLFTPHPSEATTQELGAWTRHYLAFLLIIICTCAALLIALVVWGCILYIRSNRKPYEVLNPFETVYTSVPSNDPTDEVLVFERLASDSDDSFDSSSDEELELPQPPPAAQLQPYSSLESADASRGRSGFKVWFRDTPEASPEPLHRPTPPVGPDYSKVASKLRSILK</sequence>
<proteinExistence type="inferred from homology"/>
<comment type="function">
    <text evidence="1">In epithelial cells, the heterodimer gE/gI is required for the cell-to-cell spread of the virus, by sorting nascent virions to cell junctions. Once the virus reaches the cell junctions, virus particles can spread to adjacent cells extremely rapidly through interactions with cellular receptors that accumulate at these junctions. Implicated in basolateral spread in polarized cells. In neuronal cells, gE/gI is essential for the anterograde spread of the infection throughout the host nervous system. Together with US9, the heterodimer gE/gI is involved in the sorting and transport of viral structural components toward axon tips (By similarity).</text>
</comment>
<comment type="subunit">
    <text evidence="1">Interacts with gI.</text>
</comment>
<comment type="subcellular location">
    <subcellularLocation>
        <location evidence="1">Virion membrane</location>
        <topology evidence="1">Single-pass type I membrane protein</topology>
    </subcellularLocation>
    <subcellularLocation>
        <location evidence="1">Host cell membrane</location>
        <topology evidence="1">Single-pass type I membrane protein</topology>
    </subcellularLocation>
    <subcellularLocation>
        <location evidence="1">Host cell junction</location>
    </subcellularLocation>
    <subcellularLocation>
        <location evidence="1">Host Golgi apparatus membrane</location>
        <topology evidence="1">Single-pass membrane protein</topology>
    </subcellularLocation>
    <subcellularLocation>
        <location evidence="1">Host endosome membrane</location>
        <topology evidence="1">Single-pass membrane protein</topology>
    </subcellularLocation>
    <text evidence="1">During virion morphogenesis, this protein probably accumulates in the endosomes and trans-Golgi where secondary envelopment occurs. It is probably transported to the cell surface from where it is endocytosed and directed to the trans-Golgi network (TGN), maybe through an interaction with PACS-1 sorting protein. The heterodimer gE/gI then redistributes to cell junctions to promote cell-cell spread later in the infection (By similarity).</text>
</comment>
<comment type="PTM">
    <text evidence="4">Phosphorylated on serines within the acidic cluster. Phosphorylation determines whether endocytosed viral gE traffics to the trans-Golgi network or recycles to the cell membrane.</text>
</comment>
<comment type="similarity">
    <text evidence="4">Belongs to the alphaherpesvirinae glycoprotein E family.</text>
</comment>
<name>GE_EHV4</name>
<feature type="chain" id="PRO_0000115766" description="Envelope glycoprotein E">
    <location>
        <begin position="1" status="less than"/>
        <end position="255"/>
    </location>
</feature>
<feature type="topological domain" description="Virion surface" evidence="2">
    <location>
        <begin position="1" status="less than"/>
        <end position="110"/>
    </location>
</feature>
<feature type="transmembrane region" description="Helical" evidence="2">
    <location>
        <begin position="111"/>
        <end position="131"/>
    </location>
</feature>
<feature type="topological domain" description="Intravirion" evidence="2">
    <location>
        <begin position="132"/>
        <end position="255"/>
    </location>
</feature>
<feature type="region of interest" description="Acidic" evidence="1">
    <location>
        <begin position="173"/>
        <end position="187"/>
    </location>
</feature>
<feature type="region of interest" description="Disordered" evidence="3">
    <location>
        <begin position="176"/>
        <end position="210"/>
    </location>
</feature>
<feature type="region of interest" description="Disordered" evidence="3">
    <location>
        <begin position="223"/>
        <end position="245"/>
    </location>
</feature>
<feature type="short sequence motif" description="Internalization motif" evidence="2">
    <location>
        <begin position="154"/>
        <end position="157"/>
    </location>
</feature>
<feature type="compositionally biased region" description="Acidic residues" evidence="3">
    <location>
        <begin position="176"/>
        <end position="189"/>
    </location>
</feature>
<feature type="non-terminal residue">
    <location>
        <position position="1"/>
    </location>
</feature>
<dbReference type="EMBL" id="D00318">
    <property type="protein sequence ID" value="BAA00218.1"/>
    <property type="molecule type" value="Genomic_DNA"/>
</dbReference>
<dbReference type="SMR" id="P18345"/>
<dbReference type="GO" id="GO:0044175">
    <property type="term" value="C:host cell endosome membrane"/>
    <property type="evidence" value="ECO:0007669"/>
    <property type="project" value="UniProtKB-SubCell"/>
</dbReference>
<dbReference type="GO" id="GO:0044178">
    <property type="term" value="C:host cell Golgi membrane"/>
    <property type="evidence" value="ECO:0007669"/>
    <property type="project" value="UniProtKB-SubCell"/>
</dbReference>
<dbReference type="GO" id="GO:0044156">
    <property type="term" value="C:host cell junction"/>
    <property type="evidence" value="ECO:0007669"/>
    <property type="project" value="UniProtKB-SubCell"/>
</dbReference>
<dbReference type="GO" id="GO:0016020">
    <property type="term" value="C:membrane"/>
    <property type="evidence" value="ECO:0007669"/>
    <property type="project" value="UniProtKB-KW"/>
</dbReference>
<dbReference type="GO" id="GO:0019031">
    <property type="term" value="C:viral envelope"/>
    <property type="evidence" value="ECO:0007669"/>
    <property type="project" value="UniProtKB-KW"/>
</dbReference>
<dbReference type="GO" id="GO:0055036">
    <property type="term" value="C:virion membrane"/>
    <property type="evidence" value="ECO:0007669"/>
    <property type="project" value="UniProtKB-SubCell"/>
</dbReference>
<dbReference type="Gene3D" id="2.60.40.10">
    <property type="entry name" value="Immunoglobulins"/>
    <property type="match status" value="1"/>
</dbReference>
<dbReference type="InterPro" id="IPR003404">
    <property type="entry name" value="Herpes_glycopE_Fc"/>
</dbReference>
<dbReference type="InterPro" id="IPR036179">
    <property type="entry name" value="Ig-like_dom_sf"/>
</dbReference>
<dbReference type="InterPro" id="IPR013783">
    <property type="entry name" value="Ig-like_fold"/>
</dbReference>
<dbReference type="Pfam" id="PF02480">
    <property type="entry name" value="Herpes_gE"/>
    <property type="match status" value="1"/>
</dbReference>
<dbReference type="SUPFAM" id="SSF48726">
    <property type="entry name" value="Immunoglobulin"/>
    <property type="match status" value="1"/>
</dbReference>
<keyword id="KW-0325">Glycoprotein</keyword>
<keyword id="KW-1031">Host cell junction</keyword>
<keyword id="KW-1032">Host cell membrane</keyword>
<keyword id="KW-1039">Host endosome</keyword>
<keyword id="KW-1040">Host Golgi apparatus</keyword>
<keyword id="KW-1043">Host membrane</keyword>
<keyword id="KW-0472">Membrane</keyword>
<keyword id="KW-0812">Transmembrane</keyword>
<keyword id="KW-1133">Transmembrane helix</keyword>
<keyword id="KW-0261">Viral envelope protein</keyword>
<keyword id="KW-0946">Virion</keyword>
<gene>
    <name type="primary">gE</name>
</gene>
<reference key="1">
    <citation type="journal article" date="1988" name="J. Gen. Virol.">
        <title>Characterization of the genome of equine herpesvirus 1 subtype 2.</title>
        <authorList>
            <person name="Cullinane A.A."/>
            <person name="Rixon F.J."/>
            <person name="Davison A.J."/>
        </authorList>
    </citation>
    <scope>NUCLEOTIDE SEQUENCE [GENOMIC DNA]</scope>
</reference>
<protein>
    <recommendedName>
        <fullName>Envelope glycoprotein E</fullName>
        <shortName>gE</shortName>
    </recommendedName>
</protein>